<keyword id="KW-0131">Cell cycle</keyword>
<keyword id="KW-0132">Cell division</keyword>
<keyword id="KW-0143">Chaperone</keyword>
<keyword id="KW-0963">Cytoplasm</keyword>
<keyword id="KW-0413">Isomerase</keyword>
<keyword id="KW-1185">Reference proteome</keyword>
<keyword id="KW-0697">Rotamase</keyword>
<organism>
    <name type="scientific">Streptococcus mutans serotype c (strain ATCC 700610 / UA159)</name>
    <dbReference type="NCBI Taxonomy" id="210007"/>
    <lineage>
        <taxon>Bacteria</taxon>
        <taxon>Bacillati</taxon>
        <taxon>Bacillota</taxon>
        <taxon>Bacilli</taxon>
        <taxon>Lactobacillales</taxon>
        <taxon>Streptococcaceae</taxon>
        <taxon>Streptococcus</taxon>
    </lineage>
</organism>
<name>TIG_STRMU</name>
<protein>
    <recommendedName>
        <fullName evidence="1">Trigger factor</fullName>
        <shortName evidence="1">TF</shortName>
        <ecNumber evidence="1">5.2.1.8</ecNumber>
    </recommendedName>
    <alternativeName>
        <fullName evidence="1">PPIase</fullName>
    </alternativeName>
</protein>
<proteinExistence type="inferred from homology"/>
<feature type="chain" id="PRO_0000179437" description="Trigger factor">
    <location>
        <begin position="1"/>
        <end position="427"/>
    </location>
</feature>
<feature type="domain" description="PPIase FKBP-type" evidence="1">
    <location>
        <begin position="163"/>
        <end position="248"/>
    </location>
</feature>
<reference key="1">
    <citation type="journal article" date="2002" name="Proc. Natl. Acad. Sci. U.S.A.">
        <title>Genome sequence of Streptococcus mutans UA159, a cariogenic dental pathogen.</title>
        <authorList>
            <person name="Ajdic D.J."/>
            <person name="McShan W.M."/>
            <person name="McLaughlin R.E."/>
            <person name="Savic G."/>
            <person name="Chang J."/>
            <person name="Carson M.B."/>
            <person name="Primeaux C."/>
            <person name="Tian R."/>
            <person name="Kenton S."/>
            <person name="Jia H.G."/>
            <person name="Lin S.P."/>
            <person name="Qian Y."/>
            <person name="Li S."/>
            <person name="Zhu H."/>
            <person name="Najar F.Z."/>
            <person name="Lai H."/>
            <person name="White J."/>
            <person name="Roe B.A."/>
            <person name="Ferretti J.J."/>
        </authorList>
    </citation>
    <scope>NUCLEOTIDE SEQUENCE [LARGE SCALE GENOMIC DNA]</scope>
    <source>
        <strain>ATCC 700610 / UA159</strain>
    </source>
</reference>
<dbReference type="EC" id="5.2.1.8" evidence="1"/>
<dbReference type="EMBL" id="AE014133">
    <property type="protein sequence ID" value="AAN57875.1"/>
    <property type="molecule type" value="Genomic_DNA"/>
</dbReference>
<dbReference type="RefSeq" id="NP_720569.1">
    <property type="nucleotide sequence ID" value="NC_004350.2"/>
</dbReference>
<dbReference type="RefSeq" id="WP_002263425.1">
    <property type="nucleotide sequence ID" value="NC_004350.2"/>
</dbReference>
<dbReference type="SMR" id="Q8CWZ6"/>
<dbReference type="STRING" id="210007.SMU_91"/>
<dbReference type="KEGG" id="smu:SMU_91"/>
<dbReference type="PATRIC" id="fig|210007.7.peg.79"/>
<dbReference type="eggNOG" id="COG0544">
    <property type="taxonomic scope" value="Bacteria"/>
</dbReference>
<dbReference type="HOGENOM" id="CLU_033058_3_2_9"/>
<dbReference type="OrthoDB" id="9767721at2"/>
<dbReference type="PhylomeDB" id="Q8CWZ6"/>
<dbReference type="Proteomes" id="UP000002512">
    <property type="component" value="Chromosome"/>
</dbReference>
<dbReference type="GO" id="GO:0005737">
    <property type="term" value="C:cytoplasm"/>
    <property type="evidence" value="ECO:0007669"/>
    <property type="project" value="UniProtKB-SubCell"/>
</dbReference>
<dbReference type="GO" id="GO:0003755">
    <property type="term" value="F:peptidyl-prolyl cis-trans isomerase activity"/>
    <property type="evidence" value="ECO:0007669"/>
    <property type="project" value="UniProtKB-UniRule"/>
</dbReference>
<dbReference type="GO" id="GO:0044183">
    <property type="term" value="F:protein folding chaperone"/>
    <property type="evidence" value="ECO:0007669"/>
    <property type="project" value="TreeGrafter"/>
</dbReference>
<dbReference type="GO" id="GO:0043022">
    <property type="term" value="F:ribosome binding"/>
    <property type="evidence" value="ECO:0007669"/>
    <property type="project" value="TreeGrafter"/>
</dbReference>
<dbReference type="GO" id="GO:0051083">
    <property type="term" value="P:'de novo' cotranslational protein folding"/>
    <property type="evidence" value="ECO:0007669"/>
    <property type="project" value="TreeGrafter"/>
</dbReference>
<dbReference type="GO" id="GO:0051301">
    <property type="term" value="P:cell division"/>
    <property type="evidence" value="ECO:0007669"/>
    <property type="project" value="UniProtKB-KW"/>
</dbReference>
<dbReference type="GO" id="GO:0061077">
    <property type="term" value="P:chaperone-mediated protein folding"/>
    <property type="evidence" value="ECO:0007669"/>
    <property type="project" value="TreeGrafter"/>
</dbReference>
<dbReference type="GO" id="GO:0015031">
    <property type="term" value="P:protein transport"/>
    <property type="evidence" value="ECO:0007669"/>
    <property type="project" value="UniProtKB-UniRule"/>
</dbReference>
<dbReference type="GO" id="GO:0043335">
    <property type="term" value="P:protein unfolding"/>
    <property type="evidence" value="ECO:0007669"/>
    <property type="project" value="TreeGrafter"/>
</dbReference>
<dbReference type="FunFam" id="3.10.50.40:FF:000001">
    <property type="entry name" value="Trigger factor"/>
    <property type="match status" value="1"/>
</dbReference>
<dbReference type="Gene3D" id="3.10.50.40">
    <property type="match status" value="1"/>
</dbReference>
<dbReference type="Gene3D" id="3.30.70.1050">
    <property type="entry name" value="Trigger factor ribosome-binding domain"/>
    <property type="match status" value="1"/>
</dbReference>
<dbReference type="Gene3D" id="1.10.3120.10">
    <property type="entry name" value="Trigger factor, C-terminal domain"/>
    <property type="match status" value="1"/>
</dbReference>
<dbReference type="HAMAP" id="MF_00303">
    <property type="entry name" value="Trigger_factor_Tig"/>
    <property type="match status" value="1"/>
</dbReference>
<dbReference type="InterPro" id="IPR046357">
    <property type="entry name" value="PPIase_dom_sf"/>
</dbReference>
<dbReference type="InterPro" id="IPR001179">
    <property type="entry name" value="PPIase_FKBP_dom"/>
</dbReference>
<dbReference type="InterPro" id="IPR005215">
    <property type="entry name" value="Trig_fac"/>
</dbReference>
<dbReference type="InterPro" id="IPR008880">
    <property type="entry name" value="Trigger_fac_C"/>
</dbReference>
<dbReference type="InterPro" id="IPR037041">
    <property type="entry name" value="Trigger_fac_C_sf"/>
</dbReference>
<dbReference type="InterPro" id="IPR008881">
    <property type="entry name" value="Trigger_fac_ribosome-bd_bac"/>
</dbReference>
<dbReference type="InterPro" id="IPR036611">
    <property type="entry name" value="Trigger_fac_ribosome-bd_sf"/>
</dbReference>
<dbReference type="InterPro" id="IPR027304">
    <property type="entry name" value="Trigger_fact/SurA_dom_sf"/>
</dbReference>
<dbReference type="NCBIfam" id="TIGR00115">
    <property type="entry name" value="tig"/>
    <property type="match status" value="1"/>
</dbReference>
<dbReference type="PANTHER" id="PTHR30560">
    <property type="entry name" value="TRIGGER FACTOR CHAPERONE AND PEPTIDYL-PROLYL CIS/TRANS ISOMERASE"/>
    <property type="match status" value="1"/>
</dbReference>
<dbReference type="PANTHER" id="PTHR30560:SF3">
    <property type="entry name" value="TRIGGER FACTOR-LIKE PROTEIN TIG, CHLOROPLASTIC"/>
    <property type="match status" value="1"/>
</dbReference>
<dbReference type="Pfam" id="PF00254">
    <property type="entry name" value="FKBP_C"/>
    <property type="match status" value="1"/>
</dbReference>
<dbReference type="Pfam" id="PF05698">
    <property type="entry name" value="Trigger_C"/>
    <property type="match status" value="1"/>
</dbReference>
<dbReference type="Pfam" id="PF05697">
    <property type="entry name" value="Trigger_N"/>
    <property type="match status" value="1"/>
</dbReference>
<dbReference type="PIRSF" id="PIRSF003095">
    <property type="entry name" value="Trigger_factor"/>
    <property type="match status" value="1"/>
</dbReference>
<dbReference type="SUPFAM" id="SSF54534">
    <property type="entry name" value="FKBP-like"/>
    <property type="match status" value="1"/>
</dbReference>
<dbReference type="SUPFAM" id="SSF109998">
    <property type="entry name" value="Triger factor/SurA peptide-binding domain-like"/>
    <property type="match status" value="1"/>
</dbReference>
<dbReference type="SUPFAM" id="SSF102735">
    <property type="entry name" value="Trigger factor ribosome-binding domain"/>
    <property type="match status" value="1"/>
</dbReference>
<dbReference type="PROSITE" id="PS50059">
    <property type="entry name" value="FKBP_PPIASE"/>
    <property type="match status" value="1"/>
</dbReference>
<sequence length="427" mass="47486">MSTSFENKATNRGVVTFTISQDKIKPALDQAFNKVKKDLTAPGFRKGHMPRTVFNQKFGEEALYEEALNSILPAAYEEAVAELELDVVTQPKVDVKSMEKGKDWEITAEVVTKPEVKLGDYKNLEVSVEESKEVTDAEVDEKIERERNNLAELVLKEDAAVEGDTVVIDFVGSVDGVEFDGGKGDNFSLELGSGQFIPGFEDQLVGKKAGETVKVNVTFPEDYQSADLAGKDATFVTTIHEVKAKEVPELDDELAKDIDEEVETLDELKAKYRKELEATKETAYNDAVEAAAIDLAVANAEIVELPEEMIHDEVQRAMQEFMGNMQRQGISSEMYFQLTGTTEEDLRKQYEADADKRVKTNLVIEAVAKAEGFEATDEEIEKEISDLATEYKMEAEQVRSLLSPDMLKHDIAMKKAVNVITDSAKVK</sequence>
<evidence type="ECO:0000255" key="1">
    <source>
        <dbReference type="HAMAP-Rule" id="MF_00303"/>
    </source>
</evidence>
<comment type="function">
    <text evidence="1">Involved in protein export. Acts as a chaperone by maintaining the newly synthesized protein in an open conformation. Functions as a peptidyl-prolyl cis-trans isomerase.</text>
</comment>
<comment type="catalytic activity">
    <reaction evidence="1">
        <text>[protein]-peptidylproline (omega=180) = [protein]-peptidylproline (omega=0)</text>
        <dbReference type="Rhea" id="RHEA:16237"/>
        <dbReference type="Rhea" id="RHEA-COMP:10747"/>
        <dbReference type="Rhea" id="RHEA-COMP:10748"/>
        <dbReference type="ChEBI" id="CHEBI:83833"/>
        <dbReference type="ChEBI" id="CHEBI:83834"/>
        <dbReference type="EC" id="5.2.1.8"/>
    </reaction>
</comment>
<comment type="subcellular location">
    <subcellularLocation>
        <location>Cytoplasm</location>
    </subcellularLocation>
    <text evidence="1">About half TF is bound to the ribosome near the polypeptide exit tunnel while the other half is free in the cytoplasm.</text>
</comment>
<comment type="domain">
    <text evidence="1">Consists of 3 domains; the N-terminus binds the ribosome, the middle domain has PPIase activity, while the C-terminus has intrinsic chaperone activity on its own.</text>
</comment>
<comment type="similarity">
    <text evidence="1">Belongs to the FKBP-type PPIase family. Tig subfamily.</text>
</comment>
<gene>
    <name evidence="1" type="primary">tig</name>
    <name type="ordered locus">SMU_91</name>
</gene>
<accession>Q8CWZ6</accession>